<reference key="1">
    <citation type="submission" date="2006-03" db="EMBL/GenBank/DDBJ databases">
        <title>Complete sequence of Rhodopseudomonas palustris BisB5.</title>
        <authorList>
            <consortium name="US DOE Joint Genome Institute"/>
            <person name="Copeland A."/>
            <person name="Lucas S."/>
            <person name="Lapidus A."/>
            <person name="Barry K."/>
            <person name="Detter J.C."/>
            <person name="Glavina del Rio T."/>
            <person name="Hammon N."/>
            <person name="Israni S."/>
            <person name="Dalin E."/>
            <person name="Tice H."/>
            <person name="Pitluck S."/>
            <person name="Chain P."/>
            <person name="Malfatti S."/>
            <person name="Shin M."/>
            <person name="Vergez L."/>
            <person name="Schmutz J."/>
            <person name="Larimer F."/>
            <person name="Land M."/>
            <person name="Hauser L."/>
            <person name="Pelletier D.A."/>
            <person name="Kyrpides N."/>
            <person name="Lykidis A."/>
            <person name="Oda Y."/>
            <person name="Harwood C.S."/>
            <person name="Richardson P."/>
        </authorList>
    </citation>
    <scope>NUCLEOTIDE SEQUENCE [LARGE SCALE GENOMIC DNA]</scope>
    <source>
        <strain>BisB5</strain>
    </source>
</reference>
<keyword id="KW-0028">Amino-acid biosynthesis</keyword>
<keyword id="KW-0963">Cytoplasm</keyword>
<keyword id="KW-0220">Diaminopimelate biosynthesis</keyword>
<keyword id="KW-0457">Lysine biosynthesis</keyword>
<keyword id="KW-0520">NAD</keyword>
<keyword id="KW-0521">NADP</keyword>
<keyword id="KW-0560">Oxidoreductase</keyword>
<feature type="chain" id="PRO_1000008621" description="4-hydroxy-tetrahydrodipicolinate reductase">
    <location>
        <begin position="1"/>
        <end position="271"/>
    </location>
</feature>
<feature type="active site" description="Proton donor/acceptor" evidence="1">
    <location>
        <position position="157"/>
    </location>
</feature>
<feature type="active site" description="Proton donor" evidence="1">
    <location>
        <position position="161"/>
    </location>
</feature>
<feature type="binding site" evidence="1">
    <location>
        <begin position="10"/>
        <end position="15"/>
    </location>
    <ligand>
        <name>NAD(+)</name>
        <dbReference type="ChEBI" id="CHEBI:57540"/>
    </ligand>
</feature>
<feature type="binding site" evidence="1">
    <location>
        <position position="36"/>
    </location>
    <ligand>
        <name>NAD(+)</name>
        <dbReference type="ChEBI" id="CHEBI:57540"/>
    </ligand>
</feature>
<feature type="binding site" evidence="1">
    <location>
        <begin position="100"/>
        <end position="102"/>
    </location>
    <ligand>
        <name>NAD(+)</name>
        <dbReference type="ChEBI" id="CHEBI:57540"/>
    </ligand>
</feature>
<feature type="binding site" evidence="1">
    <location>
        <begin position="124"/>
        <end position="127"/>
    </location>
    <ligand>
        <name>NAD(+)</name>
        <dbReference type="ChEBI" id="CHEBI:57540"/>
    </ligand>
</feature>
<feature type="binding site" evidence="1">
    <location>
        <position position="158"/>
    </location>
    <ligand>
        <name>(S)-2,3,4,5-tetrahydrodipicolinate</name>
        <dbReference type="ChEBI" id="CHEBI:16845"/>
    </ligand>
</feature>
<feature type="binding site" evidence="1">
    <location>
        <begin position="167"/>
        <end position="168"/>
    </location>
    <ligand>
        <name>(S)-2,3,4,5-tetrahydrodipicolinate</name>
        <dbReference type="ChEBI" id="CHEBI:16845"/>
    </ligand>
</feature>
<proteinExistence type="inferred from homology"/>
<protein>
    <recommendedName>
        <fullName evidence="1">4-hydroxy-tetrahydrodipicolinate reductase</fullName>
        <shortName evidence="1">HTPA reductase</shortName>
        <ecNumber evidence="1">1.17.1.8</ecNumber>
    </recommendedName>
</protein>
<sequence>MSDMRLIVAGAGGRMGRALTRAISETKGVVLTGALEAPGSELLGQDAGVLAGLPANGVKLSADLWTLSAGADGILDFTVPAATIANVAIAAQRGIVHVIGTTGLSSSDNAVIKSVTDQAIVVKSGNMSLGVNLLAALTRRVAQSLDAGFDIEIVEMHHRAKIDAPSGTALLLGEAAAAGRKVDLDDHSARGRDGVTGARKTGDIGFASLRGGTVTGDHSVIFAGPYERIELAHKAEDRMIFAHGALKAAQWAHGKSPGLYSMMDVLGLAEF</sequence>
<comment type="function">
    <text evidence="1">Catalyzes the conversion of 4-hydroxy-tetrahydrodipicolinate (HTPA) to tetrahydrodipicolinate.</text>
</comment>
<comment type="catalytic activity">
    <reaction evidence="1">
        <text>(S)-2,3,4,5-tetrahydrodipicolinate + NAD(+) + H2O = (2S,4S)-4-hydroxy-2,3,4,5-tetrahydrodipicolinate + NADH + H(+)</text>
        <dbReference type="Rhea" id="RHEA:35323"/>
        <dbReference type="ChEBI" id="CHEBI:15377"/>
        <dbReference type="ChEBI" id="CHEBI:15378"/>
        <dbReference type="ChEBI" id="CHEBI:16845"/>
        <dbReference type="ChEBI" id="CHEBI:57540"/>
        <dbReference type="ChEBI" id="CHEBI:57945"/>
        <dbReference type="ChEBI" id="CHEBI:67139"/>
        <dbReference type="EC" id="1.17.1.8"/>
    </reaction>
</comment>
<comment type="catalytic activity">
    <reaction evidence="1">
        <text>(S)-2,3,4,5-tetrahydrodipicolinate + NADP(+) + H2O = (2S,4S)-4-hydroxy-2,3,4,5-tetrahydrodipicolinate + NADPH + H(+)</text>
        <dbReference type="Rhea" id="RHEA:35331"/>
        <dbReference type="ChEBI" id="CHEBI:15377"/>
        <dbReference type="ChEBI" id="CHEBI:15378"/>
        <dbReference type="ChEBI" id="CHEBI:16845"/>
        <dbReference type="ChEBI" id="CHEBI:57783"/>
        <dbReference type="ChEBI" id="CHEBI:58349"/>
        <dbReference type="ChEBI" id="CHEBI:67139"/>
        <dbReference type="EC" id="1.17.1.8"/>
    </reaction>
</comment>
<comment type="pathway">
    <text evidence="1">Amino-acid biosynthesis; L-lysine biosynthesis via DAP pathway; (S)-tetrahydrodipicolinate from L-aspartate: step 4/4.</text>
</comment>
<comment type="subcellular location">
    <subcellularLocation>
        <location evidence="1">Cytoplasm</location>
    </subcellularLocation>
</comment>
<comment type="similarity">
    <text evidence="1">Belongs to the DapB family.</text>
</comment>
<comment type="caution">
    <text evidence="2">Was originally thought to be a dihydrodipicolinate reductase (DHDPR), catalyzing the conversion of dihydrodipicolinate to tetrahydrodipicolinate. However, it was shown in E.coli that the substrate of the enzymatic reaction is not dihydrodipicolinate (DHDP) but in fact (2S,4S)-4-hydroxy-2,3,4,5-tetrahydrodipicolinic acid (HTPA), the product released by the DapA-catalyzed reaction.</text>
</comment>
<organism>
    <name type="scientific">Rhodopseudomonas palustris (strain BisB5)</name>
    <dbReference type="NCBI Taxonomy" id="316057"/>
    <lineage>
        <taxon>Bacteria</taxon>
        <taxon>Pseudomonadati</taxon>
        <taxon>Pseudomonadota</taxon>
        <taxon>Alphaproteobacteria</taxon>
        <taxon>Hyphomicrobiales</taxon>
        <taxon>Nitrobacteraceae</taxon>
        <taxon>Rhodopseudomonas</taxon>
    </lineage>
</organism>
<gene>
    <name evidence="1" type="primary">dapB</name>
    <name type="ordered locus">RPD_0385</name>
</gene>
<accession>Q13E66</accession>
<name>DAPB_RHOPS</name>
<dbReference type="EC" id="1.17.1.8" evidence="1"/>
<dbReference type="EMBL" id="CP000283">
    <property type="protein sequence ID" value="ABE37623.1"/>
    <property type="molecule type" value="Genomic_DNA"/>
</dbReference>
<dbReference type="SMR" id="Q13E66"/>
<dbReference type="STRING" id="316057.RPD_0385"/>
<dbReference type="KEGG" id="rpd:RPD_0385"/>
<dbReference type="eggNOG" id="COG0289">
    <property type="taxonomic scope" value="Bacteria"/>
</dbReference>
<dbReference type="HOGENOM" id="CLU_047479_2_1_5"/>
<dbReference type="BioCyc" id="RPAL316057:RPD_RS01985-MONOMER"/>
<dbReference type="UniPathway" id="UPA00034">
    <property type="reaction ID" value="UER00018"/>
</dbReference>
<dbReference type="Proteomes" id="UP000001818">
    <property type="component" value="Chromosome"/>
</dbReference>
<dbReference type="GO" id="GO:0005829">
    <property type="term" value="C:cytosol"/>
    <property type="evidence" value="ECO:0007669"/>
    <property type="project" value="TreeGrafter"/>
</dbReference>
<dbReference type="GO" id="GO:0008839">
    <property type="term" value="F:4-hydroxy-tetrahydrodipicolinate reductase"/>
    <property type="evidence" value="ECO:0007669"/>
    <property type="project" value="UniProtKB-EC"/>
</dbReference>
<dbReference type="GO" id="GO:0051287">
    <property type="term" value="F:NAD binding"/>
    <property type="evidence" value="ECO:0007669"/>
    <property type="project" value="UniProtKB-UniRule"/>
</dbReference>
<dbReference type="GO" id="GO:0050661">
    <property type="term" value="F:NADP binding"/>
    <property type="evidence" value="ECO:0007669"/>
    <property type="project" value="UniProtKB-UniRule"/>
</dbReference>
<dbReference type="GO" id="GO:0016726">
    <property type="term" value="F:oxidoreductase activity, acting on CH or CH2 groups, NAD or NADP as acceptor"/>
    <property type="evidence" value="ECO:0007669"/>
    <property type="project" value="UniProtKB-UniRule"/>
</dbReference>
<dbReference type="GO" id="GO:0019877">
    <property type="term" value="P:diaminopimelate biosynthetic process"/>
    <property type="evidence" value="ECO:0007669"/>
    <property type="project" value="UniProtKB-UniRule"/>
</dbReference>
<dbReference type="GO" id="GO:0009089">
    <property type="term" value="P:lysine biosynthetic process via diaminopimelate"/>
    <property type="evidence" value="ECO:0007669"/>
    <property type="project" value="UniProtKB-UniRule"/>
</dbReference>
<dbReference type="CDD" id="cd02274">
    <property type="entry name" value="DHDPR_N"/>
    <property type="match status" value="1"/>
</dbReference>
<dbReference type="FunFam" id="3.30.360.10:FF:000004">
    <property type="entry name" value="4-hydroxy-tetrahydrodipicolinate reductase"/>
    <property type="match status" value="1"/>
</dbReference>
<dbReference type="Gene3D" id="3.30.360.10">
    <property type="entry name" value="Dihydrodipicolinate Reductase, domain 2"/>
    <property type="match status" value="1"/>
</dbReference>
<dbReference type="Gene3D" id="3.40.50.720">
    <property type="entry name" value="NAD(P)-binding Rossmann-like Domain"/>
    <property type="match status" value="1"/>
</dbReference>
<dbReference type="HAMAP" id="MF_00102">
    <property type="entry name" value="DapB"/>
    <property type="match status" value="1"/>
</dbReference>
<dbReference type="InterPro" id="IPR022663">
    <property type="entry name" value="DapB_C"/>
</dbReference>
<dbReference type="InterPro" id="IPR000846">
    <property type="entry name" value="DapB_N"/>
</dbReference>
<dbReference type="InterPro" id="IPR022664">
    <property type="entry name" value="DapB_N_CS"/>
</dbReference>
<dbReference type="InterPro" id="IPR023940">
    <property type="entry name" value="DHDPR_bac"/>
</dbReference>
<dbReference type="InterPro" id="IPR036291">
    <property type="entry name" value="NAD(P)-bd_dom_sf"/>
</dbReference>
<dbReference type="NCBIfam" id="TIGR00036">
    <property type="entry name" value="dapB"/>
    <property type="match status" value="1"/>
</dbReference>
<dbReference type="PANTHER" id="PTHR20836:SF0">
    <property type="entry name" value="4-HYDROXY-TETRAHYDRODIPICOLINATE REDUCTASE 1, CHLOROPLASTIC-RELATED"/>
    <property type="match status" value="1"/>
</dbReference>
<dbReference type="PANTHER" id="PTHR20836">
    <property type="entry name" value="DIHYDRODIPICOLINATE REDUCTASE"/>
    <property type="match status" value="1"/>
</dbReference>
<dbReference type="Pfam" id="PF05173">
    <property type="entry name" value="DapB_C"/>
    <property type="match status" value="1"/>
</dbReference>
<dbReference type="Pfam" id="PF01113">
    <property type="entry name" value="DapB_N"/>
    <property type="match status" value="1"/>
</dbReference>
<dbReference type="PIRSF" id="PIRSF000161">
    <property type="entry name" value="DHPR"/>
    <property type="match status" value="1"/>
</dbReference>
<dbReference type="SUPFAM" id="SSF55347">
    <property type="entry name" value="Glyceraldehyde-3-phosphate dehydrogenase-like, C-terminal domain"/>
    <property type="match status" value="1"/>
</dbReference>
<dbReference type="SUPFAM" id="SSF51735">
    <property type="entry name" value="NAD(P)-binding Rossmann-fold domains"/>
    <property type="match status" value="1"/>
</dbReference>
<dbReference type="PROSITE" id="PS01298">
    <property type="entry name" value="DAPB"/>
    <property type="match status" value="1"/>
</dbReference>
<evidence type="ECO:0000255" key="1">
    <source>
        <dbReference type="HAMAP-Rule" id="MF_00102"/>
    </source>
</evidence>
<evidence type="ECO:0000305" key="2"/>